<accession>Q6EW39</accession>
<sequence length="40" mass="4147">MADTTGRIPLWLIGTVTGILVIGLIGVFFYGSYSGLGSSL</sequence>
<proteinExistence type="inferred from homology"/>
<reference key="1">
    <citation type="journal article" date="2004" name="Mol. Biol. Evol.">
        <title>The chloroplast genome of Nymphaea alba: whole-genome analyses and the problem of identifying the most basal angiosperm.</title>
        <authorList>
            <person name="Goremykin V.V."/>
            <person name="Hirsch-Ernst K.I."/>
            <person name="Woelfl S."/>
            <person name="Hellwig F.H."/>
        </authorList>
    </citation>
    <scope>NUCLEOTIDE SEQUENCE [LARGE SCALE GENOMIC DNA]</scope>
</reference>
<organism>
    <name type="scientific">Nymphaea alba</name>
    <name type="common">White water-lily</name>
    <name type="synonym">Castalia alba</name>
    <dbReference type="NCBI Taxonomy" id="34301"/>
    <lineage>
        <taxon>Eukaryota</taxon>
        <taxon>Viridiplantae</taxon>
        <taxon>Streptophyta</taxon>
        <taxon>Embryophyta</taxon>
        <taxon>Tracheophyta</taxon>
        <taxon>Spermatophyta</taxon>
        <taxon>Magnoliopsida</taxon>
        <taxon>Nymphaeales</taxon>
        <taxon>Nymphaeaceae</taxon>
        <taxon>Nymphaea</taxon>
    </lineage>
</organism>
<gene>
    <name evidence="1" type="primary">psbJ</name>
</gene>
<evidence type="ECO:0000255" key="1">
    <source>
        <dbReference type="HAMAP-Rule" id="MF_01305"/>
    </source>
</evidence>
<protein>
    <recommendedName>
        <fullName evidence="1">Photosystem II reaction center protein J</fullName>
        <shortName evidence="1">PSII-J</shortName>
    </recommendedName>
</protein>
<feature type="chain" id="PRO_0000216603" description="Photosystem II reaction center protein J">
    <location>
        <begin position="1"/>
        <end position="40"/>
    </location>
</feature>
<feature type="transmembrane region" description="Helical" evidence="1">
    <location>
        <begin position="8"/>
        <end position="28"/>
    </location>
</feature>
<comment type="function">
    <text evidence="1">One of the components of the core complex of photosystem II (PSII). PSII is a light-driven water:plastoquinone oxidoreductase that uses light energy to abstract electrons from H(2)O, generating O(2) and a proton gradient subsequently used for ATP formation. It consists of a core antenna complex that captures photons, and an electron transfer chain that converts photonic excitation into a charge separation.</text>
</comment>
<comment type="subunit">
    <text evidence="1">PSII is composed of 1 copy each of membrane proteins PsbA, PsbB, PsbC, PsbD, PsbE, PsbF, PsbH, PsbI, PsbJ, PsbK, PsbL, PsbM, PsbT, PsbX, PsbY, PsbZ, Psb30/Ycf12, at least 3 peripheral proteins of the oxygen-evolving complex and a large number of cofactors. It forms dimeric complexes.</text>
</comment>
<comment type="subcellular location">
    <subcellularLocation>
        <location evidence="1">Plastid</location>
        <location evidence="1">Chloroplast thylakoid membrane</location>
        <topology evidence="1">Single-pass membrane protein</topology>
    </subcellularLocation>
</comment>
<comment type="similarity">
    <text evidence="1">Belongs to the PsbJ family.</text>
</comment>
<geneLocation type="chloroplast"/>
<keyword id="KW-0150">Chloroplast</keyword>
<keyword id="KW-0472">Membrane</keyword>
<keyword id="KW-0602">Photosynthesis</keyword>
<keyword id="KW-0604">Photosystem II</keyword>
<keyword id="KW-0934">Plastid</keyword>
<keyword id="KW-0674">Reaction center</keyword>
<keyword id="KW-0793">Thylakoid</keyword>
<keyword id="KW-0812">Transmembrane</keyword>
<keyword id="KW-1133">Transmembrane helix</keyword>
<name>PSBJ_NYMAL</name>
<dbReference type="EMBL" id="AJ627251">
    <property type="protein sequence ID" value="CAF28607.1"/>
    <property type="molecule type" value="Genomic_DNA"/>
</dbReference>
<dbReference type="RefSeq" id="YP_053169.1">
    <property type="nucleotide sequence ID" value="NC_006050.1"/>
</dbReference>
<dbReference type="SMR" id="Q6EW39"/>
<dbReference type="GeneID" id="2896144"/>
<dbReference type="GO" id="GO:0009535">
    <property type="term" value="C:chloroplast thylakoid membrane"/>
    <property type="evidence" value="ECO:0007669"/>
    <property type="project" value="UniProtKB-SubCell"/>
</dbReference>
<dbReference type="GO" id="GO:0009539">
    <property type="term" value="C:photosystem II reaction center"/>
    <property type="evidence" value="ECO:0007669"/>
    <property type="project" value="InterPro"/>
</dbReference>
<dbReference type="GO" id="GO:0015979">
    <property type="term" value="P:photosynthesis"/>
    <property type="evidence" value="ECO:0007669"/>
    <property type="project" value="UniProtKB-UniRule"/>
</dbReference>
<dbReference type="Gene3D" id="6.10.250.2070">
    <property type="match status" value="1"/>
</dbReference>
<dbReference type="HAMAP" id="MF_01305">
    <property type="entry name" value="PSII_PsbJ"/>
    <property type="match status" value="1"/>
</dbReference>
<dbReference type="InterPro" id="IPR002682">
    <property type="entry name" value="PSII_PsbJ"/>
</dbReference>
<dbReference type="InterPro" id="IPR037267">
    <property type="entry name" value="PSII_PsbJ_sf"/>
</dbReference>
<dbReference type="NCBIfam" id="NF002722">
    <property type="entry name" value="PRK02565.1"/>
    <property type="match status" value="1"/>
</dbReference>
<dbReference type="PANTHER" id="PTHR34812">
    <property type="entry name" value="PHOTOSYSTEM II REACTION CENTER PROTEIN J"/>
    <property type="match status" value="1"/>
</dbReference>
<dbReference type="PANTHER" id="PTHR34812:SF3">
    <property type="entry name" value="PHOTOSYSTEM II REACTION CENTER PROTEIN J"/>
    <property type="match status" value="1"/>
</dbReference>
<dbReference type="Pfam" id="PF01788">
    <property type="entry name" value="PsbJ"/>
    <property type="match status" value="1"/>
</dbReference>
<dbReference type="SUPFAM" id="SSF161021">
    <property type="entry name" value="Photosystem II reaction center protein J, PsbJ"/>
    <property type="match status" value="1"/>
</dbReference>